<name>IRS4_HUMAN</name>
<protein>
    <recommendedName>
        <fullName>Insulin receptor substrate 4</fullName>
        <shortName>IRS-4</shortName>
    </recommendedName>
    <alternativeName>
        <fullName>160 kDa phosphotyrosine protein</fullName>
        <shortName>py160</shortName>
    </alternativeName>
    <alternativeName>
        <fullName>Phosphoprotein of 160 kDa</fullName>
        <shortName>pp160</shortName>
    </alternativeName>
</protein>
<organism>
    <name type="scientific">Homo sapiens</name>
    <name type="common">Human</name>
    <dbReference type="NCBI Taxonomy" id="9606"/>
    <lineage>
        <taxon>Eukaryota</taxon>
        <taxon>Metazoa</taxon>
        <taxon>Chordata</taxon>
        <taxon>Craniata</taxon>
        <taxon>Vertebrata</taxon>
        <taxon>Euteleostomi</taxon>
        <taxon>Mammalia</taxon>
        <taxon>Eutheria</taxon>
        <taxon>Euarchontoglires</taxon>
        <taxon>Primates</taxon>
        <taxon>Haplorrhini</taxon>
        <taxon>Catarrhini</taxon>
        <taxon>Hominidae</taxon>
        <taxon>Homo</taxon>
    </lineage>
</organism>
<dbReference type="EMBL" id="AF007567">
    <property type="protein sequence ID" value="AAC51738.1"/>
    <property type="molecule type" value="mRNA"/>
</dbReference>
<dbReference type="EMBL" id="AL035425">
    <property type="status" value="NOT_ANNOTATED_CDS"/>
    <property type="molecule type" value="Genomic_DNA"/>
</dbReference>
<dbReference type="EMBL" id="CH471120">
    <property type="protein sequence ID" value="EAX02682.1"/>
    <property type="molecule type" value="Genomic_DNA"/>
</dbReference>
<dbReference type="CCDS" id="CCDS14544.1"/>
<dbReference type="RefSeq" id="NP_003595.1">
    <property type="nucleotide sequence ID" value="NM_003604.2"/>
</dbReference>
<dbReference type="SMR" id="O14654"/>
<dbReference type="BioGRID" id="114048">
    <property type="interactions" value="317"/>
</dbReference>
<dbReference type="CORUM" id="O14654"/>
<dbReference type="FunCoup" id="O14654">
    <property type="interactions" value="1398"/>
</dbReference>
<dbReference type="IntAct" id="O14654">
    <property type="interactions" value="148"/>
</dbReference>
<dbReference type="MINT" id="O14654"/>
<dbReference type="STRING" id="9606.ENSP00000361202"/>
<dbReference type="GlyGen" id="O14654">
    <property type="glycosylation" value="5 sites, 2 N-linked glycans (2 sites), 1 O-linked glycan (2 sites)"/>
</dbReference>
<dbReference type="iPTMnet" id="O14654"/>
<dbReference type="PhosphoSitePlus" id="O14654"/>
<dbReference type="SwissPalm" id="O14654"/>
<dbReference type="BioMuta" id="IRS4"/>
<dbReference type="jPOST" id="O14654"/>
<dbReference type="MassIVE" id="O14654"/>
<dbReference type="PaxDb" id="9606-ENSP00000361202"/>
<dbReference type="PeptideAtlas" id="O14654"/>
<dbReference type="ProteomicsDB" id="48151"/>
<dbReference type="Antibodypedia" id="15310">
    <property type="antibodies" value="165 antibodies from 30 providers"/>
</dbReference>
<dbReference type="DNASU" id="8471"/>
<dbReference type="Ensembl" id="ENST00000564206.2">
    <property type="protein sequence ID" value="ENSP00000505547.1"/>
    <property type="gene ID" value="ENSG00000133124.12"/>
</dbReference>
<dbReference type="GeneID" id="8471"/>
<dbReference type="KEGG" id="hsa:8471"/>
<dbReference type="UCSC" id="uc004eoc.3">
    <property type="organism name" value="human"/>
</dbReference>
<dbReference type="AGR" id="HGNC:6128"/>
<dbReference type="CTD" id="8471"/>
<dbReference type="DisGeNET" id="8471"/>
<dbReference type="GeneCards" id="IRS4"/>
<dbReference type="HGNC" id="HGNC:6128">
    <property type="gene designation" value="IRS4"/>
</dbReference>
<dbReference type="HPA" id="ENSG00000133124">
    <property type="expression patterns" value="Tissue enhanced (choroid plexus, lymphoid tissue, ovary, pituitary gland)"/>
</dbReference>
<dbReference type="MalaCards" id="IRS4"/>
<dbReference type="MIM" id="300904">
    <property type="type" value="gene"/>
</dbReference>
<dbReference type="MIM" id="301035">
    <property type="type" value="phenotype"/>
</dbReference>
<dbReference type="neXtProt" id="NX_O14654"/>
<dbReference type="OpenTargets" id="ENSG00000133124"/>
<dbReference type="PharmGKB" id="PA29923"/>
<dbReference type="VEuPathDB" id="HostDB:ENSG00000133124"/>
<dbReference type="eggNOG" id="ENOG502SD84">
    <property type="taxonomic scope" value="Eukaryota"/>
</dbReference>
<dbReference type="GeneTree" id="ENSGT00940000160883"/>
<dbReference type="HOGENOM" id="CLU_290952_0_0_1"/>
<dbReference type="InParanoid" id="O14654"/>
<dbReference type="OMA" id="VIFNPAM"/>
<dbReference type="OrthoDB" id="946068at2759"/>
<dbReference type="PAN-GO" id="O14654">
    <property type="GO annotations" value="5 GO annotations based on evolutionary models"/>
</dbReference>
<dbReference type="PhylomeDB" id="O14654"/>
<dbReference type="TreeFam" id="TF325994"/>
<dbReference type="PathwayCommons" id="O14654"/>
<dbReference type="Reactome" id="R-HSA-2428928">
    <property type="pathway name" value="IRS-related events triggered by IGF1R"/>
</dbReference>
<dbReference type="SignaLink" id="O14654"/>
<dbReference type="SIGNOR" id="O14654"/>
<dbReference type="BioGRID-ORCS" id="8471">
    <property type="hits" value="20 hits in 783 CRISPR screens"/>
</dbReference>
<dbReference type="GeneWiki" id="IRS4"/>
<dbReference type="GenomeRNAi" id="8471"/>
<dbReference type="Pharos" id="O14654">
    <property type="development level" value="Tbio"/>
</dbReference>
<dbReference type="PRO" id="PR:O14654"/>
<dbReference type="Proteomes" id="UP000005640">
    <property type="component" value="Chromosome X"/>
</dbReference>
<dbReference type="RNAct" id="O14654">
    <property type="molecule type" value="protein"/>
</dbReference>
<dbReference type="Bgee" id="ENSG00000133124">
    <property type="expression patterns" value="Expressed in pituitary gland and 27 other cell types or tissues"/>
</dbReference>
<dbReference type="GO" id="GO:0005829">
    <property type="term" value="C:cytosol"/>
    <property type="evidence" value="ECO:0000318"/>
    <property type="project" value="GO_Central"/>
</dbReference>
<dbReference type="GO" id="GO:0005886">
    <property type="term" value="C:plasma membrane"/>
    <property type="evidence" value="ECO:0000318"/>
    <property type="project" value="GO_Central"/>
</dbReference>
<dbReference type="GO" id="GO:0005158">
    <property type="term" value="F:insulin receptor binding"/>
    <property type="evidence" value="ECO:0000318"/>
    <property type="project" value="GO_Central"/>
</dbReference>
<dbReference type="GO" id="GO:0043548">
    <property type="term" value="F:phosphatidylinositol 3-kinase binding"/>
    <property type="evidence" value="ECO:0000318"/>
    <property type="project" value="GO_Central"/>
</dbReference>
<dbReference type="GO" id="GO:0008286">
    <property type="term" value="P:insulin receptor signaling pathway"/>
    <property type="evidence" value="ECO:0000318"/>
    <property type="project" value="GO_Central"/>
</dbReference>
<dbReference type="GO" id="GO:0007165">
    <property type="term" value="P:signal transduction"/>
    <property type="evidence" value="ECO:0000304"/>
    <property type="project" value="ProtInc"/>
</dbReference>
<dbReference type="CDD" id="cd01257">
    <property type="entry name" value="PH_IRS"/>
    <property type="match status" value="1"/>
</dbReference>
<dbReference type="CDD" id="cd01204">
    <property type="entry name" value="PTB_IRS"/>
    <property type="match status" value="1"/>
</dbReference>
<dbReference type="FunFam" id="2.30.29.30:FF:000029">
    <property type="entry name" value="Insulin receptor substrate 1"/>
    <property type="match status" value="1"/>
</dbReference>
<dbReference type="FunFam" id="2.30.29.30:FF:000318">
    <property type="entry name" value="insulin receptor substrate 4"/>
    <property type="match status" value="1"/>
</dbReference>
<dbReference type="Gene3D" id="2.30.29.30">
    <property type="entry name" value="Pleckstrin-homology domain (PH domain)/Phosphotyrosine-binding domain (PTB)"/>
    <property type="match status" value="2"/>
</dbReference>
<dbReference type="InterPro" id="IPR039011">
    <property type="entry name" value="IRS"/>
</dbReference>
<dbReference type="InterPro" id="IPR002404">
    <property type="entry name" value="IRS_PTB"/>
</dbReference>
<dbReference type="InterPro" id="IPR011993">
    <property type="entry name" value="PH-like_dom_sf"/>
</dbReference>
<dbReference type="InterPro" id="IPR001849">
    <property type="entry name" value="PH_domain"/>
</dbReference>
<dbReference type="PANTHER" id="PTHR10614">
    <property type="entry name" value="INSULIN RECEPTOR SUBSTRATE"/>
    <property type="match status" value="1"/>
</dbReference>
<dbReference type="PANTHER" id="PTHR10614:SF2">
    <property type="entry name" value="INSULIN RECEPTOR SUBSTRATE 4"/>
    <property type="match status" value="1"/>
</dbReference>
<dbReference type="Pfam" id="PF02174">
    <property type="entry name" value="IRS"/>
    <property type="match status" value="1"/>
</dbReference>
<dbReference type="PRINTS" id="PR00628">
    <property type="entry name" value="INSULINRSI"/>
</dbReference>
<dbReference type="SMART" id="SM01244">
    <property type="entry name" value="IRS"/>
    <property type="match status" value="1"/>
</dbReference>
<dbReference type="SMART" id="SM00233">
    <property type="entry name" value="PH"/>
    <property type="match status" value="1"/>
</dbReference>
<dbReference type="SMART" id="SM00310">
    <property type="entry name" value="PTBI"/>
    <property type="match status" value="1"/>
</dbReference>
<dbReference type="SUPFAM" id="SSF101447">
    <property type="entry name" value="Formin homology 2 domain (FH2 domain)"/>
    <property type="match status" value="1"/>
</dbReference>
<dbReference type="SUPFAM" id="SSF50729">
    <property type="entry name" value="PH domain-like"/>
    <property type="match status" value="2"/>
</dbReference>
<dbReference type="PROSITE" id="PS51064">
    <property type="entry name" value="IRS_PTB"/>
    <property type="match status" value="1"/>
</dbReference>
<dbReference type="PROSITE" id="PS50003">
    <property type="entry name" value="PH_DOMAIN"/>
    <property type="match status" value="1"/>
</dbReference>
<gene>
    <name type="primary">IRS4</name>
</gene>
<proteinExistence type="evidence at protein level"/>
<evidence type="ECO:0000250" key="1">
    <source>
        <dbReference type="UniProtKB" id="Q9Z0Y7"/>
    </source>
</evidence>
<evidence type="ECO:0000255" key="2">
    <source>
        <dbReference type="PROSITE-ProRule" id="PRU00145"/>
    </source>
</evidence>
<evidence type="ECO:0000255" key="3">
    <source>
        <dbReference type="PROSITE-ProRule" id="PRU00389"/>
    </source>
</evidence>
<evidence type="ECO:0000256" key="4">
    <source>
        <dbReference type="SAM" id="MobiDB-lite"/>
    </source>
</evidence>
<evidence type="ECO:0000269" key="5">
    <source>
    </source>
</evidence>
<evidence type="ECO:0000269" key="6">
    <source>
    </source>
</evidence>
<evidence type="ECO:0000269" key="7">
    <source>
    </source>
</evidence>
<evidence type="ECO:0000269" key="8">
    <source>
    </source>
</evidence>
<evidence type="ECO:0000269" key="9">
    <source>
    </source>
</evidence>
<evidence type="ECO:0000269" key="10">
    <source>
    </source>
</evidence>
<evidence type="ECO:0000269" key="11">
    <source>
    </source>
</evidence>
<evidence type="ECO:0000269" key="12">
    <source>
    </source>
</evidence>
<evidence type="ECO:0000269" key="13">
    <source>
    </source>
</evidence>
<evidence type="ECO:0000269" key="14">
    <source>
    </source>
</evidence>
<evidence type="ECO:0000269" key="15">
    <source>
    </source>
</evidence>
<evidence type="ECO:0000269" key="16">
    <source>
    </source>
</evidence>
<evidence type="ECO:0000269" key="17">
    <source>
    </source>
</evidence>
<evidence type="ECO:0000269" key="18">
    <source>
    </source>
</evidence>
<evidence type="ECO:0000269" key="19">
    <source>
    </source>
</evidence>
<accession>O14654</accession>
<sequence>MASCSFTRDQATRRLRGAAAAAAAALAAVVTTPLLSSGTPTALIGTGSSCPGAMWLSTATGSRSDSESEEEDLPVGEEVCKRGYLRKQKHGHRRYFVLKLETADAPARLEYYENARKFRHSVRAAAAAAAAAASGAAIPPLIPPRRVITLYQCFSVSQRADARYRHLIALFTQDEYFAMVAENESEQESWYLLLSRLILESKRRRCGTLGAQPDGEPAALAAAAAAEPPFYKDVWQVIVKPRGLGHRKELSGVFRLCLTDEEVVFVRLNTEVASVVVQLLSIRRCGHSEQYFFLEVGRSTVIGPGELWMQVDDCVVAQNMHELFLEKMRALCADEYRARCRSYSISIGAHLLTLLSARRHLGLVPLEPGGWLRRSRFEQFCHLRAIGDGEDEMLFTRRFVTPSEPVAHSRRGRLHLPRGRRSRRAVSVPASFFRRLAPSPARPRHPAEAPNNGARLSSEVSGSGSGNFGEEGNPQGKEDQEGSGGDYMPMNNWGSGNGRGSGGGQGSNGQGSSSHSSGGNQCSGEGQGSRGGQGSNGQGSGGNQCSRDGQGTAGGHGSGGGQRPGGGHGSGGGQGPGDGHGSGGGKNSGGGKGSGSGKGSDGDGERGKSLKKRSYFGKLTQSKQQQMPPPPPPPPPPPPAGGTGGKGKSGGRFRLYFCVDRGATKECKEAKEVKDAEIPEGAARGPHRARAFDEDEDDPYVPMRPGVATPLVSSSDYMPMAPQNVSASKKRHSRSPFEDSRGYMMMFPRVSPPPAPSPPKAPDTNKEDDSKDNDSESDYMFMAPGAGAIPKNPRNPQGGSSSKSWSSYFSLPNPFRSSPLGQNDNSEYVPMLPGKFLGRGLDKEVSYNWDPKDAASKPSGEGSFSKPGDGGSPSKPSDHEPPKNKAKRPNRLSFITKGYKIKPKPQKPTHEQREADSSSDYVNMDFTKRESNTPAPSTQGLPDSWGIIAEPRQSAFSNYVNVEFGVPFPNPANDLSDLLRAIPRANPLSLDSARWPLPPLPLSATGSNAIEEEGDYIEVIFNSAMTPAMALADSAIRYDAETGRIYVVDPFSECCMDISLSPSRCSEPPPVARLLQEEEQERRRPQSRSQSFFAAARAAVSAFPTDSLERDLSPSSAPAVASAAEPTLALSQVVAAASALAAAPGIGAAAAAAGFDSASARWFQPVANAADAEAVRGAQDVAGGSNPGAHNPSANLARGDNQAGGAAAAAAAPEPPPRSRRVPRPPEREDSDNDDDTHVRMDFARRDNQFDSPKRGR</sequence>
<reference key="1">
    <citation type="journal article" date="1997" name="J. Biol. Chem.">
        <title>A novel 160-kDa phosphotyrosine protein in insulin-treated embryonic kidney cells is a new member of the insulin receptor substrate family.</title>
        <authorList>
            <person name="Lavan B.E."/>
            <person name="Fantin V.R."/>
            <person name="Chang E.T."/>
            <person name="Lane W.S."/>
            <person name="Keller S.R."/>
            <person name="Lienhard G.E."/>
        </authorList>
    </citation>
    <scope>NUCLEOTIDE SEQUENCE [MRNA]</scope>
    <scope>PROTEIN SEQUENCE OF 100-117; 233-240; 613-618; 836-843 AND 844-852</scope>
    <scope>PHOSPHORYLATION</scope>
    <source>
        <tissue>Kidney</tissue>
    </source>
</reference>
<reference key="2">
    <citation type="journal article" date="2005" name="Nature">
        <title>The DNA sequence of the human X chromosome.</title>
        <authorList>
            <person name="Ross M.T."/>
            <person name="Grafham D.V."/>
            <person name="Coffey A.J."/>
            <person name="Scherer S."/>
            <person name="McLay K."/>
            <person name="Muzny D."/>
            <person name="Platzer M."/>
            <person name="Howell G.R."/>
            <person name="Burrows C."/>
            <person name="Bird C.P."/>
            <person name="Frankish A."/>
            <person name="Lovell F.L."/>
            <person name="Howe K.L."/>
            <person name="Ashurst J.L."/>
            <person name="Fulton R.S."/>
            <person name="Sudbrak R."/>
            <person name="Wen G."/>
            <person name="Jones M.C."/>
            <person name="Hurles M.E."/>
            <person name="Andrews T.D."/>
            <person name="Scott C.E."/>
            <person name="Searle S."/>
            <person name="Ramser J."/>
            <person name="Whittaker A."/>
            <person name="Deadman R."/>
            <person name="Carter N.P."/>
            <person name="Hunt S.E."/>
            <person name="Chen R."/>
            <person name="Cree A."/>
            <person name="Gunaratne P."/>
            <person name="Havlak P."/>
            <person name="Hodgson A."/>
            <person name="Metzker M.L."/>
            <person name="Richards S."/>
            <person name="Scott G."/>
            <person name="Steffen D."/>
            <person name="Sodergren E."/>
            <person name="Wheeler D.A."/>
            <person name="Worley K.C."/>
            <person name="Ainscough R."/>
            <person name="Ambrose K.D."/>
            <person name="Ansari-Lari M.A."/>
            <person name="Aradhya S."/>
            <person name="Ashwell R.I."/>
            <person name="Babbage A.K."/>
            <person name="Bagguley C.L."/>
            <person name="Ballabio A."/>
            <person name="Banerjee R."/>
            <person name="Barker G.E."/>
            <person name="Barlow K.F."/>
            <person name="Barrett I.P."/>
            <person name="Bates K.N."/>
            <person name="Beare D.M."/>
            <person name="Beasley H."/>
            <person name="Beasley O."/>
            <person name="Beck A."/>
            <person name="Bethel G."/>
            <person name="Blechschmidt K."/>
            <person name="Brady N."/>
            <person name="Bray-Allen S."/>
            <person name="Bridgeman A.M."/>
            <person name="Brown A.J."/>
            <person name="Brown M.J."/>
            <person name="Bonnin D."/>
            <person name="Bruford E.A."/>
            <person name="Buhay C."/>
            <person name="Burch P."/>
            <person name="Burford D."/>
            <person name="Burgess J."/>
            <person name="Burrill W."/>
            <person name="Burton J."/>
            <person name="Bye J.M."/>
            <person name="Carder C."/>
            <person name="Carrel L."/>
            <person name="Chako J."/>
            <person name="Chapman J.C."/>
            <person name="Chavez D."/>
            <person name="Chen E."/>
            <person name="Chen G."/>
            <person name="Chen Y."/>
            <person name="Chen Z."/>
            <person name="Chinault C."/>
            <person name="Ciccodicola A."/>
            <person name="Clark S.Y."/>
            <person name="Clarke G."/>
            <person name="Clee C.M."/>
            <person name="Clegg S."/>
            <person name="Clerc-Blankenburg K."/>
            <person name="Clifford K."/>
            <person name="Cobley V."/>
            <person name="Cole C.G."/>
            <person name="Conquer J.S."/>
            <person name="Corby N."/>
            <person name="Connor R.E."/>
            <person name="David R."/>
            <person name="Davies J."/>
            <person name="Davis C."/>
            <person name="Davis J."/>
            <person name="Delgado O."/>
            <person name="Deshazo D."/>
            <person name="Dhami P."/>
            <person name="Ding Y."/>
            <person name="Dinh H."/>
            <person name="Dodsworth S."/>
            <person name="Draper H."/>
            <person name="Dugan-Rocha S."/>
            <person name="Dunham A."/>
            <person name="Dunn M."/>
            <person name="Durbin K.J."/>
            <person name="Dutta I."/>
            <person name="Eades T."/>
            <person name="Ellwood M."/>
            <person name="Emery-Cohen A."/>
            <person name="Errington H."/>
            <person name="Evans K.L."/>
            <person name="Faulkner L."/>
            <person name="Francis F."/>
            <person name="Frankland J."/>
            <person name="Fraser A.E."/>
            <person name="Galgoczy P."/>
            <person name="Gilbert J."/>
            <person name="Gill R."/>
            <person name="Gloeckner G."/>
            <person name="Gregory S.G."/>
            <person name="Gribble S."/>
            <person name="Griffiths C."/>
            <person name="Grocock R."/>
            <person name="Gu Y."/>
            <person name="Gwilliam R."/>
            <person name="Hamilton C."/>
            <person name="Hart E.A."/>
            <person name="Hawes A."/>
            <person name="Heath P.D."/>
            <person name="Heitmann K."/>
            <person name="Hennig S."/>
            <person name="Hernandez J."/>
            <person name="Hinzmann B."/>
            <person name="Ho S."/>
            <person name="Hoffs M."/>
            <person name="Howden P.J."/>
            <person name="Huckle E.J."/>
            <person name="Hume J."/>
            <person name="Hunt P.J."/>
            <person name="Hunt A.R."/>
            <person name="Isherwood J."/>
            <person name="Jacob L."/>
            <person name="Johnson D."/>
            <person name="Jones S."/>
            <person name="de Jong P.J."/>
            <person name="Joseph S.S."/>
            <person name="Keenan S."/>
            <person name="Kelly S."/>
            <person name="Kershaw J.K."/>
            <person name="Khan Z."/>
            <person name="Kioschis P."/>
            <person name="Klages S."/>
            <person name="Knights A.J."/>
            <person name="Kosiura A."/>
            <person name="Kovar-Smith C."/>
            <person name="Laird G.K."/>
            <person name="Langford C."/>
            <person name="Lawlor S."/>
            <person name="Leversha M."/>
            <person name="Lewis L."/>
            <person name="Liu W."/>
            <person name="Lloyd C."/>
            <person name="Lloyd D.M."/>
            <person name="Loulseged H."/>
            <person name="Loveland J.E."/>
            <person name="Lovell J.D."/>
            <person name="Lozado R."/>
            <person name="Lu J."/>
            <person name="Lyne R."/>
            <person name="Ma J."/>
            <person name="Maheshwari M."/>
            <person name="Matthews L.H."/>
            <person name="McDowall J."/>
            <person name="McLaren S."/>
            <person name="McMurray A."/>
            <person name="Meidl P."/>
            <person name="Meitinger T."/>
            <person name="Milne S."/>
            <person name="Miner G."/>
            <person name="Mistry S.L."/>
            <person name="Morgan M."/>
            <person name="Morris S."/>
            <person name="Mueller I."/>
            <person name="Mullikin J.C."/>
            <person name="Nguyen N."/>
            <person name="Nordsiek G."/>
            <person name="Nyakatura G."/>
            <person name="O'dell C.N."/>
            <person name="Okwuonu G."/>
            <person name="Palmer S."/>
            <person name="Pandian R."/>
            <person name="Parker D."/>
            <person name="Parrish J."/>
            <person name="Pasternak S."/>
            <person name="Patel D."/>
            <person name="Pearce A.V."/>
            <person name="Pearson D.M."/>
            <person name="Pelan S.E."/>
            <person name="Perez L."/>
            <person name="Porter K.M."/>
            <person name="Ramsey Y."/>
            <person name="Reichwald K."/>
            <person name="Rhodes S."/>
            <person name="Ridler K.A."/>
            <person name="Schlessinger D."/>
            <person name="Schueler M.G."/>
            <person name="Sehra H.K."/>
            <person name="Shaw-Smith C."/>
            <person name="Shen H."/>
            <person name="Sheridan E.M."/>
            <person name="Shownkeen R."/>
            <person name="Skuce C.D."/>
            <person name="Smith M.L."/>
            <person name="Sotheran E.C."/>
            <person name="Steingruber H.E."/>
            <person name="Steward C.A."/>
            <person name="Storey R."/>
            <person name="Swann R.M."/>
            <person name="Swarbreck D."/>
            <person name="Tabor P.E."/>
            <person name="Taudien S."/>
            <person name="Taylor T."/>
            <person name="Teague B."/>
            <person name="Thomas K."/>
            <person name="Thorpe A."/>
            <person name="Timms K."/>
            <person name="Tracey A."/>
            <person name="Trevanion S."/>
            <person name="Tromans A.C."/>
            <person name="d'Urso M."/>
            <person name="Verduzco D."/>
            <person name="Villasana D."/>
            <person name="Waldron L."/>
            <person name="Wall M."/>
            <person name="Wang Q."/>
            <person name="Warren J."/>
            <person name="Warry G.L."/>
            <person name="Wei X."/>
            <person name="West A."/>
            <person name="Whitehead S.L."/>
            <person name="Whiteley M.N."/>
            <person name="Wilkinson J.E."/>
            <person name="Willey D.L."/>
            <person name="Williams G."/>
            <person name="Williams L."/>
            <person name="Williamson A."/>
            <person name="Williamson H."/>
            <person name="Wilming L."/>
            <person name="Woodmansey R.L."/>
            <person name="Wray P.W."/>
            <person name="Yen J."/>
            <person name="Zhang J."/>
            <person name="Zhou J."/>
            <person name="Zoghbi H."/>
            <person name="Zorilla S."/>
            <person name="Buck D."/>
            <person name="Reinhardt R."/>
            <person name="Poustka A."/>
            <person name="Rosenthal A."/>
            <person name="Lehrach H."/>
            <person name="Meindl A."/>
            <person name="Minx P.J."/>
            <person name="Hillier L.W."/>
            <person name="Willard H.F."/>
            <person name="Wilson R.K."/>
            <person name="Waterston R.H."/>
            <person name="Rice C.M."/>
            <person name="Vaudin M."/>
            <person name="Coulson A."/>
            <person name="Nelson D.L."/>
            <person name="Weinstock G."/>
            <person name="Sulston J.E."/>
            <person name="Durbin R.M."/>
            <person name="Hubbard T."/>
            <person name="Gibbs R.A."/>
            <person name="Beck S."/>
            <person name="Rogers J."/>
            <person name="Bentley D.R."/>
        </authorList>
    </citation>
    <scope>NUCLEOTIDE SEQUENCE [LARGE SCALE GENOMIC DNA]</scope>
</reference>
<reference key="3">
    <citation type="submission" date="2005-09" db="EMBL/GenBank/DDBJ databases">
        <authorList>
            <person name="Mural R.J."/>
            <person name="Istrail S."/>
            <person name="Sutton G.G."/>
            <person name="Florea L."/>
            <person name="Halpern A.L."/>
            <person name="Mobarry C.M."/>
            <person name="Lippert R."/>
            <person name="Walenz B."/>
            <person name="Shatkay H."/>
            <person name="Dew I."/>
            <person name="Miller J.R."/>
            <person name="Flanigan M.J."/>
            <person name="Edwards N.J."/>
            <person name="Bolanos R."/>
            <person name="Fasulo D."/>
            <person name="Halldorsson B.V."/>
            <person name="Hannenhalli S."/>
            <person name="Turner R."/>
            <person name="Yooseph S."/>
            <person name="Lu F."/>
            <person name="Nusskern D.R."/>
            <person name="Shue B.C."/>
            <person name="Zheng X.H."/>
            <person name="Zhong F."/>
            <person name="Delcher A.L."/>
            <person name="Huson D.H."/>
            <person name="Kravitz S.A."/>
            <person name="Mouchard L."/>
            <person name="Reinert K."/>
            <person name="Remington K.A."/>
            <person name="Clark A.G."/>
            <person name="Waterman M.S."/>
            <person name="Eichler E.E."/>
            <person name="Adams M.D."/>
            <person name="Hunkapiller M.W."/>
            <person name="Myers E.W."/>
            <person name="Venter J.C."/>
        </authorList>
    </citation>
    <scope>NUCLEOTIDE SEQUENCE [LARGE SCALE GENOMIC DNA]</scope>
</reference>
<reference key="4">
    <citation type="journal article" date="1998" name="J. Biol. Chem.">
        <title>Characterization of insulin receptor substrate 4 in human embryonic kidney 293 cells.</title>
        <authorList>
            <person name="Fantin V.R."/>
            <person name="Sparling J.D."/>
            <person name="Slot J.W."/>
            <person name="Keller S.R."/>
            <person name="Lienhard G.E."/>
            <person name="Lavan B.E."/>
        </authorList>
    </citation>
    <scope>FUNCTION</scope>
    <scope>SUBCELLULAR LOCATION</scope>
    <scope>INTERACTION WITH GRB2 AND PIK3R1</scope>
    <scope>PHOSPHORYLATION</scope>
</reference>
<reference key="5">
    <citation type="journal article" date="1998" name="J. Biol. Chem.">
        <title>Interplay of the proto-oncogene proteins CrkL and CrkII in insulin-like growth factor-I receptor-mediated signal transduction.</title>
        <authorList>
            <person name="Koval A.P."/>
            <person name="Karas M."/>
            <person name="Zick Y."/>
            <person name="LeRoith D."/>
        </authorList>
    </citation>
    <scope>INTERACTION WITH CRK AND CRKL</scope>
</reference>
<reference key="6">
    <citation type="journal article" date="1999" name="J. Biol. Chem.">
        <title>Insulin receptor substrate-4 enhances insulin-like growth factor-I-induced cell proliferation.</title>
        <authorList>
            <person name="Qu B.-H."/>
            <person name="Karas M."/>
            <person name="Koval A."/>
            <person name="LeRoith D."/>
        </authorList>
    </citation>
    <scope>FUNCTION</scope>
</reference>
<reference key="7">
    <citation type="journal article" date="2000" name="Mol. Cell. Biol.">
        <title>IRS-4 mediates protein kinase B signaling during insulin stimulation without promoting antiapoptosis.</title>
        <authorList>
            <person name="Uchida T."/>
            <person name="Myers M.G. Jr."/>
            <person name="White M.F."/>
        </authorList>
    </citation>
    <scope>FUNCTION</scope>
    <scope>INTERACTION WITH GRB2 AND PIK3R1</scope>
</reference>
<reference key="8">
    <citation type="journal article" date="2001" name="Endocrinology">
        <title>The insulin-like growth factor I receptor-induced interaction of insulin receptor substrate-4 and Crk-II.</title>
        <authorList>
            <person name="Karas M."/>
            <person name="Koval A.P."/>
            <person name="Zick Y."/>
            <person name="LeRoith D."/>
        </authorList>
    </citation>
    <scope>INTERACTION WITH CRK</scope>
    <scope>MUTAGENESIS OF TYR-700; TYR-717; TYR-743 AND TYR-779</scope>
</reference>
<reference key="9">
    <citation type="journal article" date="2002" name="J. Biol. Chem.">
        <title>Insulin receptor substrate 4 associates with the protein IRAS.</title>
        <authorList>
            <person name="Sano H."/>
            <person name="Liu S.C.H."/>
            <person name="Lane W.S."/>
            <person name="Piletz J.E."/>
            <person name="Lienhard G.E."/>
        </authorList>
    </citation>
    <scope>INTERACTION WITH NISCH</scope>
</reference>
<reference key="10">
    <citation type="journal article" date="2003" name="Endocrinology">
        <title>Insulin receptor substrate-4 is expressed in muscle tissue without acting as a substrate for the insulin receptor.</title>
        <authorList>
            <person name="Schreyer S."/>
            <person name="Ledwig D."/>
            <person name="Rakatzi I."/>
            <person name="Kloeting I."/>
            <person name="Eckel J."/>
        </authorList>
    </citation>
    <scope>FUNCTION</scope>
    <scope>TISSUE SPECIFICITY</scope>
</reference>
<reference key="11">
    <citation type="journal article" date="2004" name="J. Biol. Chem.">
        <title>Tyrosine phosphoproteomics of fibroblast growth factor signaling: a role for insulin receptor substrate-4.</title>
        <authorList>
            <person name="Hinsby A.M."/>
            <person name="Olsen J.V."/>
            <person name="Mann M."/>
        </authorList>
    </citation>
    <scope>PHOSPHORYLATION AT TYR-921</scope>
    <scope>INTERACTION WITH SHC1; GRB2; PHOSPHOLIPASE C-GAMMA AND PHOSPHATIDYLINOSITOL 3-KINASE</scope>
    <scope>IDENTIFICATION BY MASS SPECTROMETRY</scope>
</reference>
<reference key="12">
    <citation type="journal article" date="2004" name="J. Biol. Chem.">
        <title>Protein phosphatase 4 interacts with and down-regulates insulin receptor substrate 4 following tumor necrosis factor-alpha stimulation.</title>
        <authorList>
            <person name="Mihindukulasuriya K.A."/>
            <person name="Zhou G."/>
            <person name="Qin J."/>
            <person name="Tan T.-H."/>
        </authorList>
    </citation>
    <scope>INTERACTION WITH PPP4C</scope>
    <scope>INDUCTION</scope>
    <scope>IDENTIFICATION BY MASS SPECTROMETRY</scope>
</reference>
<reference key="13">
    <citation type="journal article" date="2005" name="Oncogene">
        <title>Interaction between Brk kinase and insulin receptor substrate-4.</title>
        <authorList>
            <person name="Qiu H."/>
            <person name="Zappacosta F."/>
            <person name="Su W."/>
            <person name="Annan R.S."/>
            <person name="Miller W.T."/>
        </authorList>
    </citation>
    <scope>INTERACTION WITH PTK6</scope>
    <scope>IDENTIFICATION BY MASS SPECTROMETRY</scope>
</reference>
<reference key="14">
    <citation type="journal article" date="2007" name="J. Hepatol.">
        <title>Role of insulin receptor substrate-4 in IGF-I-stimulated HEPG2 proliferation.</title>
        <authorList>
            <person name="Cuevas E.P."/>
            <person name="Escribano O."/>
            <person name="Chiloeches A."/>
            <person name="Ramirez Rubio S."/>
            <person name="Roman I.D."/>
            <person name="Fernandez-Moreno M.D."/>
            <person name="Guijarro L.G."/>
        </authorList>
    </citation>
    <scope>FUNCTION</scope>
    <scope>TISSUE SPECIFICITY</scope>
</reference>
<reference key="15">
    <citation type="journal article" date="2009" name="Anal. Chem.">
        <title>Lys-N and trypsin cover complementary parts of the phosphoproteome in a refined SCX-based approach.</title>
        <authorList>
            <person name="Gauci S."/>
            <person name="Helbig A.O."/>
            <person name="Slijper M."/>
            <person name="Krijgsveld J."/>
            <person name="Heck A.J."/>
            <person name="Mohammed S."/>
        </authorList>
    </citation>
    <scope>IDENTIFICATION BY MASS SPECTROMETRY [LARGE SCALE ANALYSIS]</scope>
</reference>
<reference key="16">
    <citation type="journal article" date="2011" name="BMC Neurosci.">
        <title>Ankyrin repeat and SOCS box containing protein 4 (Asb-4) colocalizes with insulin receptor substrate 4 (IRS4) in the hypothalamic neurons and mediates IRS4 degradation.</title>
        <authorList>
            <person name="Li J.Y."/>
            <person name="Chai B."/>
            <person name="Zhang W."/>
            <person name="Wu X."/>
            <person name="Zhang C."/>
            <person name="Fritze D."/>
            <person name="Xia Z."/>
            <person name="Patterson C."/>
            <person name="Mulholland M.W."/>
        </authorList>
    </citation>
    <scope>INTERACTION WITH ASB4</scope>
    <scope>UBIQUITINATION</scope>
</reference>
<reference key="17">
    <citation type="journal article" date="2006" name="Science">
        <title>The consensus coding sequences of human breast and colorectal cancers.</title>
        <authorList>
            <person name="Sjoeblom T."/>
            <person name="Jones S."/>
            <person name="Wood L.D."/>
            <person name="Parsons D.W."/>
            <person name="Lin J."/>
            <person name="Barber T.D."/>
            <person name="Mandelker D."/>
            <person name="Leary R.J."/>
            <person name="Ptak J."/>
            <person name="Silliman N."/>
            <person name="Szabo S."/>
            <person name="Buckhaults P."/>
            <person name="Farrell C."/>
            <person name="Meeh P."/>
            <person name="Markowitz S.D."/>
            <person name="Willis J."/>
            <person name="Dawson D."/>
            <person name="Willson J.K.V."/>
            <person name="Gazdar A.F."/>
            <person name="Hartigan J."/>
            <person name="Wu L."/>
            <person name="Liu C."/>
            <person name="Parmigiani G."/>
            <person name="Park B.H."/>
            <person name="Bachman K.E."/>
            <person name="Papadopoulos N."/>
            <person name="Vogelstein B."/>
            <person name="Kinzler K.W."/>
            <person name="Velculescu V.E."/>
        </authorList>
    </citation>
    <scope>VARIANTS [LARGE SCALE ANALYSIS] VAL-20; GLU-215 AND ARG-557</scope>
</reference>
<reference key="18">
    <citation type="journal article" date="2018" name="J. Med. Genet.">
        <title>Mutations in IRS4 are associated with central hypothyroidism.</title>
        <authorList>
            <person name="Heinen C.A."/>
            <person name="de Vries E.M."/>
            <person name="Alders M."/>
            <person name="Bikker H."/>
            <person name="Zwaveling-Soonawala N."/>
            <person name="van den Akker E.L.T."/>
            <person name="Bakker B."/>
            <person name="Hoorweg-Nijman G."/>
            <person name="Roelfsema F."/>
            <person name="Hennekam R.C."/>
            <person name="Boelen A."/>
            <person name="van Trotsenburg A.S.P."/>
            <person name="Fliers E."/>
        </authorList>
    </citation>
    <scope>INVOLVEMENT IN CHNG9</scope>
    <scope>VARIANT CHNG9 215-GLY--ARG-1257 DEL</scope>
</reference>
<feature type="chain" id="PRO_0000314678" description="Insulin receptor substrate 4">
    <location>
        <begin position="1"/>
        <end position="1257"/>
    </location>
</feature>
<feature type="domain" description="PH" evidence="2">
    <location>
        <begin position="78"/>
        <end position="199"/>
    </location>
</feature>
<feature type="domain" description="IRS-type PTB" evidence="3">
    <location>
        <begin position="231"/>
        <end position="335"/>
    </location>
</feature>
<feature type="region of interest" description="Disordered" evidence="4">
    <location>
        <begin position="406"/>
        <end position="653"/>
    </location>
</feature>
<feature type="region of interest" description="Disordered" evidence="4">
    <location>
        <begin position="678"/>
        <end position="921"/>
    </location>
</feature>
<feature type="region of interest" description="CRK-binding">
    <location>
        <begin position="678"/>
        <end position="800"/>
    </location>
</feature>
<feature type="region of interest" description="GRB2-binding">
    <location>
        <begin position="895"/>
        <end position="897"/>
    </location>
</feature>
<feature type="region of interest" description="Disordered" evidence="4">
    <location>
        <begin position="1179"/>
        <end position="1257"/>
    </location>
</feature>
<feature type="short sequence motif" description="YXXM motif 1">
    <location>
        <begin position="487"/>
        <end position="490"/>
    </location>
</feature>
<feature type="short sequence motif" description="YXXM motif 2">
    <location>
        <begin position="700"/>
        <end position="703"/>
    </location>
</feature>
<feature type="short sequence motif" description="YXXM motif 3">
    <location>
        <begin position="717"/>
        <end position="720"/>
    </location>
</feature>
<feature type="short sequence motif" description="YXXM motif 4">
    <location>
        <begin position="743"/>
        <end position="746"/>
    </location>
</feature>
<feature type="short sequence motif" description="YXXM motif 5">
    <location>
        <begin position="779"/>
        <end position="782"/>
    </location>
</feature>
<feature type="short sequence motif" description="YXXM motif 6">
    <location>
        <begin position="828"/>
        <end position="831"/>
    </location>
</feature>
<feature type="short sequence motif" description="YXXM motif 7">
    <location>
        <begin position="921"/>
        <end position="924"/>
    </location>
</feature>
<feature type="compositionally biased region" description="Basic residues" evidence="4">
    <location>
        <begin position="408"/>
        <end position="424"/>
    </location>
</feature>
<feature type="compositionally biased region" description="Gly residues" evidence="4">
    <location>
        <begin position="495"/>
        <end position="509"/>
    </location>
</feature>
<feature type="compositionally biased region" description="Low complexity" evidence="4">
    <location>
        <begin position="510"/>
        <end position="524"/>
    </location>
</feature>
<feature type="compositionally biased region" description="Gly residues" evidence="4">
    <location>
        <begin position="525"/>
        <end position="542"/>
    </location>
</feature>
<feature type="compositionally biased region" description="Gly residues" evidence="4">
    <location>
        <begin position="551"/>
        <end position="599"/>
    </location>
</feature>
<feature type="compositionally biased region" description="Pro residues" evidence="4">
    <location>
        <begin position="627"/>
        <end position="640"/>
    </location>
</feature>
<feature type="compositionally biased region" description="Gly residues" evidence="4">
    <location>
        <begin position="641"/>
        <end position="650"/>
    </location>
</feature>
<feature type="compositionally biased region" description="Pro residues" evidence="4">
    <location>
        <begin position="750"/>
        <end position="761"/>
    </location>
</feature>
<feature type="compositionally biased region" description="Basic and acidic residues" evidence="4">
    <location>
        <begin position="763"/>
        <end position="774"/>
    </location>
</feature>
<feature type="compositionally biased region" description="Low complexity" evidence="4">
    <location>
        <begin position="800"/>
        <end position="810"/>
    </location>
</feature>
<feature type="compositionally biased region" description="Polar residues" evidence="4">
    <location>
        <begin position="815"/>
        <end position="826"/>
    </location>
</feature>
<feature type="compositionally biased region" description="Basic and acidic residues" evidence="4">
    <location>
        <begin position="840"/>
        <end position="855"/>
    </location>
</feature>
<feature type="compositionally biased region" description="Basic and acidic residues" evidence="4">
    <location>
        <begin position="1236"/>
        <end position="1257"/>
    </location>
</feature>
<feature type="modified residue" description="Phosphotyrosine" evidence="10">
    <location>
        <position position="921"/>
    </location>
</feature>
<feature type="sequence variant" id="VAR_038042" description="In a colorectal cancer sample; somatic mutation." evidence="13">
    <original>A</original>
    <variation>V</variation>
    <location>
        <position position="20"/>
    </location>
</feature>
<feature type="sequence variant" id="VAR_051078" description="In dbSNP:rs1801162.">
    <original>L</original>
    <variation>F</variation>
    <location>
        <position position="34"/>
    </location>
</feature>
<feature type="sequence variant" id="VAR_083291" description="In CHNG9." evidence="16">
    <location>
        <begin position="215"/>
        <end position="1257"/>
    </location>
</feature>
<feature type="sequence variant" id="VAR_038043" description="In a colorectal cancer sample; somatic mutation." evidence="13">
    <original>G</original>
    <variation>E</variation>
    <location>
        <position position="215"/>
    </location>
</feature>
<feature type="sequence variant" id="VAR_051079" description="In dbSNP:rs34287560.">
    <original>N</original>
    <variation>K</variation>
    <location>
        <position position="508"/>
    </location>
</feature>
<feature type="sequence variant" id="VAR_038044" description="In a colorectal cancer sample; somatic mutation." evidence="13">
    <original>G</original>
    <variation>R</variation>
    <location>
        <position position="557"/>
    </location>
</feature>
<feature type="sequence variant" id="VAR_051080" description="In dbSNP:rs1801164.">
    <original>H</original>
    <variation>D</variation>
    <location>
        <position position="879"/>
    </location>
</feature>
<feature type="sequence variant" id="VAR_061669" description="In dbSNP:rs28546943.">
    <original>D</original>
    <variation>Y</variation>
    <location>
        <position position="1230"/>
    </location>
</feature>
<feature type="mutagenesis site" description="No effect. Reduces interaction with CRK by 50%; when associated with F-717. Abolishes interaction with CRK; when associated with F-717; F-743 and F-779." evidence="7">
    <original>Y</original>
    <variation>F</variation>
    <location>
        <position position="700"/>
    </location>
</feature>
<feature type="mutagenesis site" description="No effect. Reduces interaction with CRK by 50%; when associated with F-700. Abolishes interaction with CRK; when associated with F-700; F-743 and F-779." evidence="7">
    <original>Y</original>
    <variation>F</variation>
    <location>
        <position position="717"/>
    </location>
</feature>
<feature type="mutagenesis site" description="No effect. Reduces interaction with CRK by 50%; when associated with F-779. Abolishes interaction with CRK; when associated with F-700; F-717 and F-779." evidence="7">
    <original>Y</original>
    <variation>F</variation>
    <location>
        <position position="743"/>
    </location>
</feature>
<feature type="mutagenesis site" description="No effect. Reduces interaction with CRK by 50%; when associated with F-743. Abolishes interaction with CRK; when associated with F-700; F-717 and F-743." evidence="7">
    <original>Y</original>
    <variation>F</variation>
    <location>
        <position position="779"/>
    </location>
</feature>
<keyword id="KW-1003">Cell membrane</keyword>
<keyword id="KW-0984">Congenital hypothyroidism</keyword>
<keyword id="KW-0903">Direct protein sequencing</keyword>
<keyword id="KW-0225">Disease variant</keyword>
<keyword id="KW-0472">Membrane</keyword>
<keyword id="KW-0597">Phosphoprotein</keyword>
<keyword id="KW-1267">Proteomics identification</keyword>
<keyword id="KW-1185">Reference proteome</keyword>
<keyword id="KW-0677">Repeat</keyword>
<keyword id="KW-0807">Transducer</keyword>
<keyword id="KW-0832">Ubl conjugation</keyword>
<comment type="function">
    <text evidence="5 6 9 14 18">Acts as an interface between multiple growth factor receptors possessing tyrosine kinase activity, such as insulin receptor, IGF1R and FGFR1, and a complex network of intracellular signaling molecules containing SH2 domains. Involved in the IGF1R mitogenic signaling pathway. Promotes the AKT1 signaling pathway and BAD phosphorylation during insulin stimulation without activation of RPS6KB1 or the inhibition of apoptosis. Interaction with GRB2 enhances insulin-stimulated mitogen-activated protein kinase activity. May be involved in nonreceptor tyrosine kinase signaling in myoblasts. Plays a pivotal role in the proliferation/differentiation of hepatoblastoma cell through EPHB2 activation upon IGF1 stimulation. May play a role in the signal transduction in response to insulin and to a lesser extent in response to IL4 and GH on mitogenesis. Plays a role in growth, reproduction and glucose homeostasis. May act as negative regulators of the IGF1 signaling pathway by suppressing the function of IRS1 and IRS2.</text>
</comment>
<comment type="subunit">
    <text evidence="1 5 6 7 8 10 11 12 15 18 19">Interacts with SOCS6 in response to stimulation with either insulin or IGF1 (By similarity). Interacts with CRK and CRKL. Interaction with CRK is stronger than with CRKL. Interacts with CRK via the phosphorylated YXXM motifs. Interacts with GRB2 and PIK3R1. Interacts with PLC-gamma, SHC1, PTK6, PPP4C and NISCH. Interacts with ASB4; this interaction promotes IRS4 proteasomal degradation (PubMed:21955513).</text>
</comment>
<comment type="interaction">
    <interactant intactId="EBI-356594">
        <id>O14654</id>
    </interactant>
    <interactant intactId="EBI-886">
        <id>P46108</id>
        <label>CRK</label>
    </interactant>
    <organismsDiffer>false</organismsDiffer>
    <experiments>8</experiments>
</comment>
<comment type="interaction">
    <interactant intactId="EBI-356594">
        <id>O14654</id>
    </interactant>
    <interactant intactId="EBI-297353">
        <id>P00533</id>
        <label>EGFR</label>
    </interactant>
    <organismsDiffer>false</organismsDiffer>
    <experiments>2</experiments>
</comment>
<comment type="interaction">
    <interactant intactId="EBI-356594">
        <id>O14654</id>
    </interactant>
    <interactant intactId="EBI-720768">
        <id>Q9H492</id>
        <label>MAP1LC3A</label>
    </interactant>
    <organismsDiffer>false</organismsDiffer>
    <experiments>2</experiments>
</comment>
<comment type="interaction">
    <interactant intactId="EBI-356594">
        <id>O14654</id>
    </interactant>
    <interactant intactId="EBI-1049387">
        <id>Q15185</id>
        <label>PTGES3</label>
    </interactant>
    <organismsDiffer>false</organismsDiffer>
    <experiments>2</experiments>
</comment>
<comment type="interaction">
    <interactant intactId="EBI-356594">
        <id>O14654</id>
    </interactant>
    <interactant intactId="EBI-476295">
        <id>P31947</id>
        <label>SFN</label>
    </interactant>
    <organismsDiffer>false</organismsDiffer>
    <experiments>4</experiments>
</comment>
<comment type="interaction">
    <interactant intactId="EBI-356594">
        <id>O14654</id>
    </interactant>
    <interactant intactId="EBI-356498">
        <id>P62258</id>
        <label>YWHAE</label>
    </interactant>
    <organismsDiffer>false</organismsDiffer>
    <experiments>6</experiments>
</comment>
<comment type="subcellular location">
    <subcellularLocation>
        <location evidence="18">Cell membrane</location>
        <topology evidence="18">Peripheral membrane protein</topology>
        <orientation evidence="18">Cytoplasmic side</orientation>
    </subcellularLocation>
</comment>
<comment type="tissue specificity">
    <text evidence="9 14">Expressed in myoblasts. Expressed in liver and hepatocellular carcinoma.</text>
</comment>
<comment type="induction">
    <text evidence="11">Down-regulated by PPP4C in a phosphatase activity-dependent manner.</text>
</comment>
<comment type="PTM">
    <text evidence="10 17 18">Phosphorylated on tyrosine residues in response to both insulin and IGF1 signaling. Phosphorylated on Tyr-921 in response to FGF2 signaling. Phosphorylation of Tyr-921 is required for GRB2, phospholipase C-gamma and phosphatidylinositol 3-kinase interaction.</text>
</comment>
<comment type="PTM">
    <text evidence="15">Ubiquitinated in a ASB4-dependent manner, leading to proteasomal degradation.</text>
</comment>
<comment type="disease" evidence="16">
    <disease id="DI-05651">
        <name>Hypothyroidism, congenital, non-goitrous, 9</name>
        <acronym>CHNG9</acronym>
        <description>A form of central hypothyroidism, a disorder characterized by sub-optimal thyroid hormone secretion, due to insufficient stimulation by thyrotropin of an otherwise normal thyroid gland. It may be caused by congenital or acquired disorders of the pituitary gland or hypothalamus. CHNG9 is a congenital, X-linked recessive form. Patients have a small thyroid gland with low free T4 levels and inappropriately normal levels of thyrotropin.</description>
        <dbReference type="MIM" id="301035"/>
    </disease>
    <text>The disease is caused by variants affecting the gene represented in this entry.</text>
</comment>